<keyword id="KW-0027">Amidation</keyword>
<keyword id="KW-0044">Antibiotic</keyword>
<keyword id="KW-0929">Antimicrobial</keyword>
<keyword id="KW-0903">Direct protein sequencing</keyword>
<keyword id="KW-0295">Fungicide</keyword>
<keyword id="KW-0677">Repeat</keyword>
<keyword id="KW-0964">Secreted</keyword>
<keyword id="KW-0732">Signal</keyword>
<keyword id="KW-0800">Toxin</keyword>
<sequence>MKFSIIALALAVAFVCVAESRSEEEGYDVSEEIQAEELEEAARGGINRKLMEMVNKLRKVQGREDSEDAGRAGINRKLMEMVNKLRKVQGREDTEEAGRGGINRKLMEMVNKLRKVQGREDSEEAGRGGINRKLMEMVNKLRKVQGREDTEEARSLKDKVKSMGEKLKQYIQTWKAKFG</sequence>
<accession>Q1ELU4</accession>
<dbReference type="EMBL" id="AM232695">
    <property type="protein sequence ID" value="CAJ81655.1"/>
    <property type="molecule type" value="mRNA"/>
</dbReference>
<dbReference type="SMR" id="Q1ELU4"/>
<dbReference type="TCDB" id="1.C.138.2.1">
    <property type="family name" value="the m-zodatoxin-lt8a spider toxin (zst) family"/>
</dbReference>
<dbReference type="ArachnoServer" id="AS000055">
    <property type="toxin name" value="M-zodatoxin-Lt4b"/>
</dbReference>
<dbReference type="GO" id="GO:0005576">
    <property type="term" value="C:extracellular region"/>
    <property type="evidence" value="ECO:0007669"/>
    <property type="project" value="UniProtKB-SubCell"/>
</dbReference>
<dbReference type="GO" id="GO:0090729">
    <property type="term" value="F:toxin activity"/>
    <property type="evidence" value="ECO:0007669"/>
    <property type="project" value="UniProtKB-KW"/>
</dbReference>
<dbReference type="GO" id="GO:0042742">
    <property type="term" value="P:defense response to bacterium"/>
    <property type="evidence" value="ECO:0007669"/>
    <property type="project" value="UniProtKB-KW"/>
</dbReference>
<dbReference type="GO" id="GO:0050832">
    <property type="term" value="P:defense response to fungus"/>
    <property type="evidence" value="ECO:0007669"/>
    <property type="project" value="UniProtKB-KW"/>
</dbReference>
<dbReference type="GO" id="GO:0031640">
    <property type="term" value="P:killing of cells of another organism"/>
    <property type="evidence" value="ECO:0007669"/>
    <property type="project" value="UniProtKB-KW"/>
</dbReference>
<dbReference type="InterPro" id="IPR018802">
    <property type="entry name" value="Latarcin_precursor"/>
</dbReference>
<dbReference type="Pfam" id="PF10279">
    <property type="entry name" value="Latarcin"/>
    <property type="match status" value="2"/>
</dbReference>
<reference evidence="6 9" key="1">
    <citation type="journal article" date="2006" name="J. Biol. Chem.">
        <title>Latarcins, antimicrobial and cytolytic peptides from the venom of the spider Lachesana tarabaevi (Zodariidae) that exemplify biomolecular diversity.</title>
        <authorList>
            <person name="Kozlov S.A."/>
            <person name="Vassilevski A.A."/>
            <person name="Feofanov A.V."/>
            <person name="Surovoy A.Y."/>
            <person name="Karpunin D.V."/>
            <person name="Grishin E.V."/>
        </authorList>
    </citation>
    <scope>NUCLEOTIDE SEQUENCE [MRNA]</scope>
    <scope>PROTEIN SEQUENCE OF 155-178</scope>
    <scope>SYNTHESIS OF 155-178</scope>
    <scope>AMIDATION AT PHE-178</scope>
    <scope>FUNCTION OF M-ZODATOXIN-LT4B</scope>
    <scope>SUBCELLULAR LOCATION</scope>
    <scope>DOMAIN</scope>
    <scope>MASS SPECTROMETRY</scope>
    <source>
        <tissue>Venom</tissue>
        <tissue>Venom gland</tissue>
    </source>
</reference>
<reference key="2">
    <citation type="journal article" date="2016" name="Biochem. J.">
        <title>Lachesana tarabaevi, an expert in membrane-active toxins.</title>
        <authorList>
            <person name="Kuzmenkov A.I."/>
            <person name="Sachkova M.Y."/>
            <person name="Kovalchuk S.I."/>
            <person name="Grishin E.V."/>
            <person name="Vassilevski A.A."/>
        </authorList>
    </citation>
    <scope>PROTEIN SEQUENCE OF 44-61; 72-89; 100-117 AND 128-145</scope>
    <scope>FUNCTION OF REPETITIVE POLYPEPTIDE ELEMENT TYPE 1C</scope>
    <scope>SUBCELLULAR LOCATION</scope>
    <scope>PQM MOTIF</scope>
    <scope>MASS SPECTROMETRY</scope>
    <scope>AMIDATION AT GLN-61; GLN-89; GLN-117 AND GLN-145</scope>
    <source>
        <tissue>Venom</tissue>
    </source>
</reference>
<proteinExistence type="evidence at protein level"/>
<comment type="function">
    <text evidence="2">M-zodatoxin-Lt4b: Has antimicrobial activity against Gram-positive bacteria (A.globiformis VKM Ac-1112 (MIC=0.3 uM), and B.subtilis VKM B-501 (MIC=1.1 uM)), Gram-negative bacteria (E.coli DH5-alpha (MIC=4.4 uM), E.coli MH1 (MIC=4.4 uM), and P.aeruginosa PAO1 (MIC=&gt;35 uM)), and yeasts (P.pastoris GS115 (MIC=&gt;35 uM), and S.cerevisiae Y190 (MIC=35 uM)). Does not have hemolytic activity against rabbit erythrocytes. Causes paralysis, but is not lethal when injected into insect (M.domestica) larvae.</text>
</comment>
<comment type="function">
    <molecule>Repetitive polypeptide element type 1c</molecule>
    <text evidence="3">Shows no antimicrobial activity against Gram-positive bacterium B.subtilis B-501 or Gram-negative bacterium E.coli DH5-alpha at concentration up to 20 uM.</text>
</comment>
<comment type="subcellular location">
    <subcellularLocation>
        <location evidence="2 3">Secreted</location>
    </subcellularLocation>
</comment>
<comment type="tissue specificity">
    <text evidence="7 8">Expressed by the venom gland.</text>
</comment>
<comment type="domain">
    <text evidence="4">M-zodatoxin-Lt4a: Probably forms an alpha-helix which disrupts target cell membranes.</text>
</comment>
<comment type="PTM">
    <text evidence="5">Cleavage of the propeptide depends on the processing quadruplet motif (PQM) (XXXR, with at least one of X being E) and the inverted PQM (RXXX, with at least one of X being E).</text>
</comment>
<comment type="mass spectrometry">
    <molecule>M-zodatoxin-Lt4b peptide</molecule>
    <text>M-zodatoxin-Lt4b peptide.</text>
</comment>
<comment type="mass spectrometry">
    <molecule>M-zodatoxin-Lt4b peptide</molecule>
    <text>M-zodatoxin-Lt4b peptide.</text>
</comment>
<comment type="mass spectrometry">
    <molecule>Repetitive polypeptide element type 1c</molecule>
    <text>Repetitive polypeptide element type 1c.</text>
</comment>
<comment type="mass spectrometry">
    <text>Repetitive polypeptide element type 1d. The measured ranges are 72-89, 100-117, 128-145.</text>
</comment>
<comment type="similarity">
    <text evidence="6">Belongs to the cationic peptide 03 (latarcin) family. 04 subfamily.</text>
</comment>
<evidence type="ECO:0000255" key="1"/>
<evidence type="ECO:0000269" key="2">
    <source>
    </source>
</evidence>
<evidence type="ECO:0000269" key="3">
    <source>
    </source>
</evidence>
<evidence type="ECO:0000303" key="4">
    <source>
    </source>
</evidence>
<evidence type="ECO:0000303" key="5">
    <source>
    </source>
</evidence>
<evidence type="ECO:0000305" key="6"/>
<evidence type="ECO:0000305" key="7">
    <source>
    </source>
</evidence>
<evidence type="ECO:0000305" key="8">
    <source>
    </source>
</evidence>
<evidence type="ECO:0000312" key="9">
    <source>
        <dbReference type="EMBL" id="CAJ81655.1"/>
    </source>
</evidence>
<organism>
    <name type="scientific">Lachesana tarabaevi</name>
    <name type="common">Spider</name>
    <dbReference type="NCBI Taxonomy" id="379576"/>
    <lineage>
        <taxon>Eukaryota</taxon>
        <taxon>Metazoa</taxon>
        <taxon>Ecdysozoa</taxon>
        <taxon>Arthropoda</taxon>
        <taxon>Chelicerata</taxon>
        <taxon>Arachnida</taxon>
        <taxon>Araneae</taxon>
        <taxon>Araneomorphae</taxon>
        <taxon>Entelegynae</taxon>
        <taxon>Entelegynae incertae sedis</taxon>
        <taxon>Zodariidae</taxon>
        <taxon>Lachesana</taxon>
    </lineage>
</organism>
<feature type="signal peptide" evidence="1">
    <location>
        <begin position="1"/>
        <end position="22"/>
    </location>
</feature>
<feature type="propeptide" id="PRO_0000249746" evidence="1 2">
    <location>
        <begin position="23"/>
        <end position="43"/>
    </location>
</feature>
<feature type="peptide" id="PRO_0000434688" description="Repetitive polypeptide element type 1c" evidence="3">
    <location>
        <begin position="44"/>
        <end position="61"/>
    </location>
</feature>
<feature type="propeptide" id="PRO_0000434689" evidence="3">
    <location>
        <begin position="63"/>
        <end position="71"/>
    </location>
</feature>
<feature type="peptide" id="PRO_0000434690" description="Repetitive polypeptide element type 1d" evidence="3">
    <location>
        <begin position="72"/>
        <end position="89"/>
    </location>
</feature>
<feature type="propeptide" id="PRO_0000434691" evidence="3">
    <location>
        <begin position="91"/>
        <end position="99"/>
    </location>
</feature>
<feature type="peptide" id="PRO_0000434692" description="Repetitive polypeptide element type 1c" evidence="3">
    <location>
        <begin position="100"/>
        <end position="117"/>
    </location>
</feature>
<feature type="propeptide" id="PRO_0000434693" evidence="3">
    <location>
        <begin position="119"/>
        <end position="127"/>
    </location>
</feature>
<feature type="peptide" id="PRO_0000434694" description="Repetitive polypeptide element type 1c" evidence="3">
    <location>
        <begin position="128"/>
        <end position="145"/>
    </location>
</feature>
<feature type="propeptide" id="PRO_0000434695" evidence="3">
    <location>
        <begin position="147"/>
        <end position="154"/>
    </location>
</feature>
<feature type="peptide" id="PRO_0000249747" description="M-zodatoxin-Lt4b peptide" evidence="2">
    <location>
        <begin position="155"/>
        <end position="178"/>
    </location>
</feature>
<feature type="short sequence motif" description="Processing quadruplet motif 1" evidence="5">
    <location>
        <begin position="40"/>
        <end position="43"/>
    </location>
</feature>
<feature type="short sequence motif" description="Inverted processing quadruplet motif 1" evidence="5">
    <location>
        <begin position="63"/>
        <end position="66"/>
    </location>
</feature>
<feature type="short sequence motif" description="Processing quadruplet motif 2" evidence="5">
    <location>
        <begin position="68"/>
        <end position="71"/>
    </location>
</feature>
<feature type="short sequence motif" description="Inverted processing quadruplet motif 2" evidence="5">
    <location>
        <begin position="91"/>
        <end position="94"/>
    </location>
</feature>
<feature type="short sequence motif" description="Processing quadruplet motif 3" evidence="5">
    <location>
        <begin position="96"/>
        <end position="99"/>
    </location>
</feature>
<feature type="short sequence motif" description="Inverted processing quadruplet motif 3" evidence="5">
    <location>
        <begin position="119"/>
        <end position="122"/>
    </location>
</feature>
<feature type="short sequence motif" description="Processing quadruplet motif 4" evidence="5">
    <location>
        <begin position="124"/>
        <end position="127"/>
    </location>
</feature>
<feature type="short sequence motif" description="Inverted processing quadruplet motif 4" evidence="5">
    <location>
        <begin position="147"/>
        <end position="150"/>
    </location>
</feature>
<feature type="short sequence motif" description="Processing quadruplet motif 5" evidence="5">
    <location>
        <begin position="151"/>
        <end position="154"/>
    </location>
</feature>
<feature type="modified residue" description="Glutamine amide" evidence="3">
    <location>
        <position position="61"/>
    </location>
</feature>
<feature type="modified residue" description="Glutamine amide" evidence="3">
    <location>
        <position position="89"/>
    </location>
</feature>
<feature type="modified residue" description="Glutamine amide" evidence="3">
    <location>
        <position position="117"/>
    </location>
</feature>
<feature type="modified residue" description="Glutamine amide" evidence="3">
    <location>
        <position position="145"/>
    </location>
</feature>
<feature type="modified residue" description="Phenylalanine amide" evidence="2">
    <location>
        <position position="178"/>
    </location>
</feature>
<name>LAT4B_LACTA</name>
<protein>
    <recommendedName>
        <fullName evidence="6">M-zodatoxin-Lt4b</fullName>
        <shortName evidence="6">M-ZDTX-Lt4b</shortName>
    </recommendedName>
    <component>
        <recommendedName>
            <fullName evidence="5">Repetitive polypeptide element type 1c</fullName>
            <shortName evidence="5">Rpe 1c</shortName>
        </recommendedName>
    </component>
    <component>
        <recommendedName>
            <fullName evidence="5">Repetitive polypeptide element type 1d</fullName>
            <shortName evidence="5">Rpe 1d</shortName>
        </recommendedName>
    </component>
    <component>
        <recommendedName>
            <fullName evidence="6">M-zodatoxin-Lt4b peptide</fullName>
        </recommendedName>
        <alternativeName>
            <fullName evidence="4">Latarcin-4b</fullName>
            <shortName evidence="4">Ltc-4b</shortName>
        </alternativeName>
    </component>
</protein>